<comment type="similarity">
    <text evidence="1">Belongs to the UPF0304 family.</text>
</comment>
<sequence>MEMTNAQRLILSNQYKMMTMLDPANAERYRRLQTIIERGYGLQMRELDREFGELKEETCRTIIDIMEMYHALHVSWSNLQDQQSIDERRVTFLGFDAATEARYLGYVRFMVNVEGRYTHFDAGTHGFNAQTPMWEKYQRMLNVWHACPRQYHLSANEINQIINA</sequence>
<proteinExistence type="inferred from homology"/>
<organism>
    <name type="scientific">Escherichia coli (strain SMS-3-5 / SECEC)</name>
    <dbReference type="NCBI Taxonomy" id="439855"/>
    <lineage>
        <taxon>Bacteria</taxon>
        <taxon>Pseudomonadati</taxon>
        <taxon>Pseudomonadota</taxon>
        <taxon>Gammaproteobacteria</taxon>
        <taxon>Enterobacterales</taxon>
        <taxon>Enterobacteriaceae</taxon>
        <taxon>Escherichia</taxon>
    </lineage>
</organism>
<protein>
    <recommendedName>
        <fullName evidence="1">UPF0304 protein YfbU</fullName>
    </recommendedName>
</protein>
<evidence type="ECO:0000255" key="1">
    <source>
        <dbReference type="HAMAP-Rule" id="MF_00762"/>
    </source>
</evidence>
<reference key="1">
    <citation type="journal article" date="2008" name="J. Bacteriol.">
        <title>Insights into the environmental resistance gene pool from the genome sequence of the multidrug-resistant environmental isolate Escherichia coli SMS-3-5.</title>
        <authorList>
            <person name="Fricke W.F."/>
            <person name="Wright M.S."/>
            <person name="Lindell A.H."/>
            <person name="Harkins D.M."/>
            <person name="Baker-Austin C."/>
            <person name="Ravel J."/>
            <person name="Stepanauskas R."/>
        </authorList>
    </citation>
    <scope>NUCLEOTIDE SEQUENCE [LARGE SCALE GENOMIC DNA]</scope>
    <source>
        <strain>SMS-3-5 / SECEC</strain>
    </source>
</reference>
<accession>B1LLP8</accession>
<dbReference type="EMBL" id="CP000970">
    <property type="protein sequence ID" value="ACB15523.1"/>
    <property type="molecule type" value="Genomic_DNA"/>
</dbReference>
<dbReference type="RefSeq" id="WP_000426124.1">
    <property type="nucleotide sequence ID" value="NC_010498.1"/>
</dbReference>
<dbReference type="SMR" id="B1LLP8"/>
<dbReference type="KEGG" id="ecm:EcSMS35_2449"/>
<dbReference type="HOGENOM" id="CLU_101021_1_0_6"/>
<dbReference type="Proteomes" id="UP000007011">
    <property type="component" value="Chromosome"/>
</dbReference>
<dbReference type="FunFam" id="1.10.3190.10:FF:000001">
    <property type="entry name" value="UPF0304 protein YfbU"/>
    <property type="match status" value="1"/>
</dbReference>
<dbReference type="Gene3D" id="1.10.287.680">
    <property type="entry name" value="Helix hairpin bin"/>
    <property type="match status" value="1"/>
</dbReference>
<dbReference type="Gene3D" id="1.10.3190.10">
    <property type="entry name" value="yfbu gene product, domain 2"/>
    <property type="match status" value="1"/>
</dbReference>
<dbReference type="HAMAP" id="MF_00762">
    <property type="entry name" value="UPF0304"/>
    <property type="match status" value="1"/>
</dbReference>
<dbReference type="InterPro" id="IPR005587">
    <property type="entry name" value="UPF0304_YfbU"/>
</dbReference>
<dbReference type="InterPro" id="IPR023146">
    <property type="entry name" value="YfbU_alpha-helical_sf"/>
</dbReference>
<dbReference type="InterPro" id="IPR023145">
    <property type="entry name" value="YfbU_helix-hairpin_sf"/>
</dbReference>
<dbReference type="NCBIfam" id="NF003936">
    <property type="entry name" value="PRK05445.1"/>
    <property type="match status" value="1"/>
</dbReference>
<dbReference type="Pfam" id="PF03887">
    <property type="entry name" value="YfbU"/>
    <property type="match status" value="1"/>
</dbReference>
<dbReference type="PIRSF" id="PIRSF006272">
    <property type="entry name" value="UCP006272"/>
    <property type="match status" value="1"/>
</dbReference>
<dbReference type="SUPFAM" id="SSF116960">
    <property type="entry name" value="YfbU-like"/>
    <property type="match status" value="1"/>
</dbReference>
<name>YFBU_ECOSM</name>
<feature type="chain" id="PRO_1000198335" description="UPF0304 protein YfbU">
    <location>
        <begin position="1"/>
        <end position="164"/>
    </location>
</feature>
<gene>
    <name evidence="1" type="primary">yfbU</name>
    <name type="ordered locus">EcSMS35_2449</name>
</gene>